<feature type="chain" id="PRO_1000134527" description="Acetyl-coenzyme A carboxylase carboxyl transferase subunit alpha">
    <location>
        <begin position="1"/>
        <end position="255"/>
    </location>
</feature>
<feature type="domain" description="CoA carboxyltransferase C-terminal" evidence="2">
    <location>
        <begin position="1"/>
        <end position="235"/>
    </location>
</feature>
<proteinExistence type="inferred from homology"/>
<accession>B5E1P0</accession>
<name>ACCA_STRP4</name>
<organism>
    <name type="scientific">Streptococcus pneumoniae serotype 19F (strain G54)</name>
    <dbReference type="NCBI Taxonomy" id="512566"/>
    <lineage>
        <taxon>Bacteria</taxon>
        <taxon>Bacillati</taxon>
        <taxon>Bacillota</taxon>
        <taxon>Bacilli</taxon>
        <taxon>Lactobacillales</taxon>
        <taxon>Streptococcaceae</taxon>
        <taxon>Streptococcus</taxon>
    </lineage>
</organism>
<protein>
    <recommendedName>
        <fullName evidence="1">Acetyl-coenzyme A carboxylase carboxyl transferase subunit alpha</fullName>
        <shortName evidence="1">ACCase subunit alpha</shortName>
        <shortName evidence="1">Acetyl-CoA carboxylase carboxyltransferase subunit alpha</shortName>
        <ecNumber evidence="1">2.1.3.15</ecNumber>
    </recommendedName>
</protein>
<comment type="function">
    <text evidence="1">Component of the acetyl coenzyme A carboxylase (ACC) complex. First, biotin carboxylase catalyzes the carboxylation of biotin on its carrier protein (BCCP) and then the CO(2) group is transferred by the carboxyltransferase to acetyl-CoA to form malonyl-CoA.</text>
</comment>
<comment type="catalytic activity">
    <reaction evidence="1">
        <text>N(6)-carboxybiotinyl-L-lysyl-[protein] + acetyl-CoA = N(6)-biotinyl-L-lysyl-[protein] + malonyl-CoA</text>
        <dbReference type="Rhea" id="RHEA:54728"/>
        <dbReference type="Rhea" id="RHEA-COMP:10505"/>
        <dbReference type="Rhea" id="RHEA-COMP:10506"/>
        <dbReference type="ChEBI" id="CHEBI:57288"/>
        <dbReference type="ChEBI" id="CHEBI:57384"/>
        <dbReference type="ChEBI" id="CHEBI:83144"/>
        <dbReference type="ChEBI" id="CHEBI:83145"/>
        <dbReference type="EC" id="2.1.3.15"/>
    </reaction>
</comment>
<comment type="pathway">
    <text evidence="1">Lipid metabolism; malonyl-CoA biosynthesis; malonyl-CoA from acetyl-CoA: step 1/1.</text>
</comment>
<comment type="subunit">
    <text evidence="1">Acetyl-CoA carboxylase is a heterohexamer composed of biotin carboxyl carrier protein (AccB), biotin carboxylase (AccC) and two subunits each of ACCase subunit alpha (AccA) and ACCase subunit beta (AccD).</text>
</comment>
<comment type="subcellular location">
    <subcellularLocation>
        <location evidence="1">Cytoplasm</location>
    </subcellularLocation>
</comment>
<comment type="similarity">
    <text evidence="1">Belongs to the AccA family.</text>
</comment>
<keyword id="KW-0067">ATP-binding</keyword>
<keyword id="KW-0963">Cytoplasm</keyword>
<keyword id="KW-0275">Fatty acid biosynthesis</keyword>
<keyword id="KW-0276">Fatty acid metabolism</keyword>
<keyword id="KW-0444">Lipid biosynthesis</keyword>
<keyword id="KW-0443">Lipid metabolism</keyword>
<keyword id="KW-0547">Nucleotide-binding</keyword>
<keyword id="KW-0808">Transferase</keyword>
<reference key="1">
    <citation type="journal article" date="2001" name="Microb. Drug Resist.">
        <title>Annotated draft genomic sequence from a Streptococcus pneumoniae type 19F clinical isolate.</title>
        <authorList>
            <person name="Dopazo J."/>
            <person name="Mendoza A."/>
            <person name="Herrero J."/>
            <person name="Caldara F."/>
            <person name="Humbert Y."/>
            <person name="Friedli L."/>
            <person name="Guerrier M."/>
            <person name="Grand-Schenk E."/>
            <person name="Gandin C."/>
            <person name="de Francesco M."/>
            <person name="Polissi A."/>
            <person name="Buell G."/>
            <person name="Feger G."/>
            <person name="Garcia E."/>
            <person name="Peitsch M."/>
            <person name="Garcia-Bustos J.F."/>
        </authorList>
    </citation>
    <scope>NUCLEOTIDE SEQUENCE [LARGE SCALE GENOMIC DNA]</scope>
    <source>
        <strain>G54</strain>
    </source>
</reference>
<reference key="2">
    <citation type="submission" date="2008-03" db="EMBL/GenBank/DDBJ databases">
        <title>Pneumococcal beta glucoside metabolism investigated by whole genome comparison.</title>
        <authorList>
            <person name="Mulas L."/>
            <person name="Trappetti C."/>
            <person name="Hakenbeck R."/>
            <person name="Iannelli F."/>
            <person name="Pozzi G."/>
            <person name="Davidsen T.M."/>
            <person name="Tettelin H."/>
            <person name="Oggioni M."/>
        </authorList>
    </citation>
    <scope>NUCLEOTIDE SEQUENCE [LARGE SCALE GENOMIC DNA]</scope>
    <source>
        <strain>G54</strain>
    </source>
</reference>
<dbReference type="EC" id="2.1.3.15" evidence="1"/>
<dbReference type="EMBL" id="CP001015">
    <property type="protein sequence ID" value="ACF56282.1"/>
    <property type="molecule type" value="Genomic_DNA"/>
</dbReference>
<dbReference type="SMR" id="B5E1P0"/>
<dbReference type="KEGG" id="spx:SPG_0393"/>
<dbReference type="HOGENOM" id="CLU_015486_0_2_9"/>
<dbReference type="UniPathway" id="UPA00655">
    <property type="reaction ID" value="UER00711"/>
</dbReference>
<dbReference type="GO" id="GO:0009317">
    <property type="term" value="C:acetyl-CoA carboxylase complex"/>
    <property type="evidence" value="ECO:0007669"/>
    <property type="project" value="InterPro"/>
</dbReference>
<dbReference type="GO" id="GO:0003989">
    <property type="term" value="F:acetyl-CoA carboxylase activity"/>
    <property type="evidence" value="ECO:0007669"/>
    <property type="project" value="InterPro"/>
</dbReference>
<dbReference type="GO" id="GO:0005524">
    <property type="term" value="F:ATP binding"/>
    <property type="evidence" value="ECO:0007669"/>
    <property type="project" value="UniProtKB-KW"/>
</dbReference>
<dbReference type="GO" id="GO:0016743">
    <property type="term" value="F:carboxyl- or carbamoyltransferase activity"/>
    <property type="evidence" value="ECO:0007669"/>
    <property type="project" value="UniProtKB-UniRule"/>
</dbReference>
<dbReference type="GO" id="GO:0006633">
    <property type="term" value="P:fatty acid biosynthetic process"/>
    <property type="evidence" value="ECO:0007669"/>
    <property type="project" value="UniProtKB-KW"/>
</dbReference>
<dbReference type="GO" id="GO:2001295">
    <property type="term" value="P:malonyl-CoA biosynthetic process"/>
    <property type="evidence" value="ECO:0007669"/>
    <property type="project" value="UniProtKB-UniRule"/>
</dbReference>
<dbReference type="Gene3D" id="3.90.226.10">
    <property type="entry name" value="2-enoyl-CoA Hydratase, Chain A, domain 1"/>
    <property type="match status" value="1"/>
</dbReference>
<dbReference type="HAMAP" id="MF_00823">
    <property type="entry name" value="AcetylCoA_CT_alpha"/>
    <property type="match status" value="1"/>
</dbReference>
<dbReference type="InterPro" id="IPR001095">
    <property type="entry name" value="Acetyl_CoA_COase_a_su"/>
</dbReference>
<dbReference type="InterPro" id="IPR029045">
    <property type="entry name" value="ClpP/crotonase-like_dom_sf"/>
</dbReference>
<dbReference type="InterPro" id="IPR011763">
    <property type="entry name" value="COA_CT_C"/>
</dbReference>
<dbReference type="NCBIfam" id="TIGR00513">
    <property type="entry name" value="accA"/>
    <property type="match status" value="1"/>
</dbReference>
<dbReference type="NCBIfam" id="NF041504">
    <property type="entry name" value="AccA_sub"/>
    <property type="match status" value="1"/>
</dbReference>
<dbReference type="NCBIfam" id="NF004344">
    <property type="entry name" value="PRK05724.1"/>
    <property type="match status" value="1"/>
</dbReference>
<dbReference type="NCBIfam" id="NF008971">
    <property type="entry name" value="PRK12319.1"/>
    <property type="match status" value="1"/>
</dbReference>
<dbReference type="PANTHER" id="PTHR42853">
    <property type="entry name" value="ACETYL-COENZYME A CARBOXYLASE CARBOXYL TRANSFERASE SUBUNIT ALPHA"/>
    <property type="match status" value="1"/>
</dbReference>
<dbReference type="PANTHER" id="PTHR42853:SF3">
    <property type="entry name" value="ACETYL-COENZYME A CARBOXYLASE CARBOXYL TRANSFERASE SUBUNIT ALPHA, CHLOROPLASTIC"/>
    <property type="match status" value="1"/>
</dbReference>
<dbReference type="Pfam" id="PF03255">
    <property type="entry name" value="ACCA"/>
    <property type="match status" value="1"/>
</dbReference>
<dbReference type="PRINTS" id="PR01069">
    <property type="entry name" value="ACCCTRFRASEA"/>
</dbReference>
<dbReference type="SUPFAM" id="SSF52096">
    <property type="entry name" value="ClpP/crotonase"/>
    <property type="match status" value="1"/>
</dbReference>
<dbReference type="PROSITE" id="PS50989">
    <property type="entry name" value="COA_CT_CTER"/>
    <property type="match status" value="1"/>
</dbReference>
<sequence length="255" mass="28248">MNIAKIVREAREQSRLTTLDFATGIFDEFIQLHGDRSFRDDGAVVGGIGWLGDQAVTVVGIQKGKSLQDNLKRNFGQPHPEGYRKALRLMKQAEKFGRPVVTFINTAGAYPGVGAEERGQGEAIARNLMEMSDLKVPIIAIIIGEGGSGGALALAVADRVWMLENSIYAILSPEGFASILWKDGTRAMEAAELMKITSHELLEMDVVDKVISEIGLSSKELIKSVKKELQTELARLSQKPLEELLEERYQRFRKY</sequence>
<evidence type="ECO:0000255" key="1">
    <source>
        <dbReference type="HAMAP-Rule" id="MF_00823"/>
    </source>
</evidence>
<evidence type="ECO:0000255" key="2">
    <source>
        <dbReference type="PROSITE-ProRule" id="PRU01137"/>
    </source>
</evidence>
<gene>
    <name evidence="1" type="primary">accA</name>
    <name type="ordered locus">SPG_0393</name>
</gene>